<sequence length="332" mass="36799">MKTLGEFIVEKQHEFSQATGELTALLSAIKLGAKIIHRDINKAGLVDILGASGAENVQGEVQQKLDLFANEKLKAALKARDIVAGIASEEEDEIVVFEGCEHAKYVVLMDPLDGSSNIDVNVSVGTIFSIYRRVTPVGTPVTEEDFLQPGNKQVAAGYVVYGSSTMLVYTTGCGVHAFTYDPSLGVFCLCQERMRFPEKGKTYSINEGNYIKFPNGVKKYIKFCQEEDSSTSRPYTSRYIGSLVADFHRNLLKGGIYLYPSTASHPQGKLRLLYECNPMAFLAEQAGGKASDGKERILDIIPESLHQRRSFFVGNRHMVDDVERFIREYPDA</sequence>
<accession>B4TFG0</accession>
<proteinExistence type="inferred from homology"/>
<organism>
    <name type="scientific">Salmonella heidelberg (strain SL476)</name>
    <dbReference type="NCBI Taxonomy" id="454169"/>
    <lineage>
        <taxon>Bacteria</taxon>
        <taxon>Pseudomonadati</taxon>
        <taxon>Pseudomonadota</taxon>
        <taxon>Gammaproteobacteria</taxon>
        <taxon>Enterobacterales</taxon>
        <taxon>Enterobacteriaceae</taxon>
        <taxon>Salmonella</taxon>
    </lineage>
</organism>
<keyword id="KW-0119">Carbohydrate metabolism</keyword>
<keyword id="KW-0963">Cytoplasm</keyword>
<keyword id="KW-0378">Hydrolase</keyword>
<keyword id="KW-0460">Magnesium</keyword>
<keyword id="KW-0479">Metal-binding</keyword>
<name>F16PA_SALHS</name>
<gene>
    <name evidence="1" type="primary">fbp</name>
    <name type="ordered locus">SeHA_C4835</name>
</gene>
<reference key="1">
    <citation type="journal article" date="2011" name="J. Bacteriol.">
        <title>Comparative genomics of 28 Salmonella enterica isolates: evidence for CRISPR-mediated adaptive sublineage evolution.</title>
        <authorList>
            <person name="Fricke W.F."/>
            <person name="Mammel M.K."/>
            <person name="McDermott P.F."/>
            <person name="Tartera C."/>
            <person name="White D.G."/>
            <person name="Leclerc J.E."/>
            <person name="Ravel J."/>
            <person name="Cebula T.A."/>
        </authorList>
    </citation>
    <scope>NUCLEOTIDE SEQUENCE [LARGE SCALE GENOMIC DNA]</scope>
    <source>
        <strain>SL476</strain>
    </source>
</reference>
<protein>
    <recommendedName>
        <fullName evidence="1">Fructose-1,6-bisphosphatase class 1</fullName>
        <shortName evidence="1">FBPase class 1</shortName>
        <ecNumber evidence="1">3.1.3.11</ecNumber>
    </recommendedName>
    <alternativeName>
        <fullName evidence="1">D-fructose-1,6-bisphosphate 1-phosphohydrolase class 1</fullName>
    </alternativeName>
</protein>
<comment type="catalytic activity">
    <reaction evidence="1">
        <text>beta-D-fructose 1,6-bisphosphate + H2O = beta-D-fructose 6-phosphate + phosphate</text>
        <dbReference type="Rhea" id="RHEA:11064"/>
        <dbReference type="ChEBI" id="CHEBI:15377"/>
        <dbReference type="ChEBI" id="CHEBI:32966"/>
        <dbReference type="ChEBI" id="CHEBI:43474"/>
        <dbReference type="ChEBI" id="CHEBI:57634"/>
        <dbReference type="EC" id="3.1.3.11"/>
    </reaction>
</comment>
<comment type="cofactor">
    <cofactor evidence="1">
        <name>Mg(2+)</name>
        <dbReference type="ChEBI" id="CHEBI:18420"/>
    </cofactor>
    <text evidence="1">Binds 2 magnesium ions per subunit.</text>
</comment>
<comment type="pathway">
    <text evidence="1">Carbohydrate biosynthesis; gluconeogenesis.</text>
</comment>
<comment type="subunit">
    <text evidence="1">Homotetramer.</text>
</comment>
<comment type="subcellular location">
    <subcellularLocation>
        <location evidence="1">Cytoplasm</location>
    </subcellularLocation>
</comment>
<comment type="similarity">
    <text evidence="1">Belongs to the FBPase class 1 family.</text>
</comment>
<dbReference type="EC" id="3.1.3.11" evidence="1"/>
<dbReference type="EMBL" id="CP001120">
    <property type="protein sequence ID" value="ACF67152.1"/>
    <property type="molecule type" value="Genomic_DNA"/>
</dbReference>
<dbReference type="RefSeq" id="WP_000853764.1">
    <property type="nucleotide sequence ID" value="NC_011083.1"/>
</dbReference>
<dbReference type="SMR" id="B4TFG0"/>
<dbReference type="KEGG" id="seh:SeHA_C4835"/>
<dbReference type="HOGENOM" id="CLU_039977_2_2_6"/>
<dbReference type="UniPathway" id="UPA00138"/>
<dbReference type="Proteomes" id="UP000001866">
    <property type="component" value="Chromosome"/>
</dbReference>
<dbReference type="GO" id="GO:0005829">
    <property type="term" value="C:cytosol"/>
    <property type="evidence" value="ECO:0007669"/>
    <property type="project" value="TreeGrafter"/>
</dbReference>
<dbReference type="GO" id="GO:0042132">
    <property type="term" value="F:fructose 1,6-bisphosphate 1-phosphatase activity"/>
    <property type="evidence" value="ECO:0007669"/>
    <property type="project" value="UniProtKB-UniRule"/>
</dbReference>
<dbReference type="GO" id="GO:0000287">
    <property type="term" value="F:magnesium ion binding"/>
    <property type="evidence" value="ECO:0007669"/>
    <property type="project" value="UniProtKB-UniRule"/>
</dbReference>
<dbReference type="GO" id="GO:0030388">
    <property type="term" value="P:fructose 1,6-bisphosphate metabolic process"/>
    <property type="evidence" value="ECO:0007669"/>
    <property type="project" value="TreeGrafter"/>
</dbReference>
<dbReference type="GO" id="GO:0006002">
    <property type="term" value="P:fructose 6-phosphate metabolic process"/>
    <property type="evidence" value="ECO:0007669"/>
    <property type="project" value="TreeGrafter"/>
</dbReference>
<dbReference type="GO" id="GO:0006000">
    <property type="term" value="P:fructose metabolic process"/>
    <property type="evidence" value="ECO:0007669"/>
    <property type="project" value="TreeGrafter"/>
</dbReference>
<dbReference type="GO" id="GO:0006094">
    <property type="term" value="P:gluconeogenesis"/>
    <property type="evidence" value="ECO:0007669"/>
    <property type="project" value="UniProtKB-UniRule"/>
</dbReference>
<dbReference type="GO" id="GO:0005986">
    <property type="term" value="P:sucrose biosynthetic process"/>
    <property type="evidence" value="ECO:0007669"/>
    <property type="project" value="TreeGrafter"/>
</dbReference>
<dbReference type="CDD" id="cd00354">
    <property type="entry name" value="FBPase"/>
    <property type="match status" value="1"/>
</dbReference>
<dbReference type="FunFam" id="3.30.540.10:FF:000002">
    <property type="entry name" value="Fructose-1,6-bisphosphatase class 1"/>
    <property type="match status" value="1"/>
</dbReference>
<dbReference type="FunFam" id="3.40.190.80:FF:000001">
    <property type="entry name" value="Fructose-1,6-bisphosphatase class 1"/>
    <property type="match status" value="1"/>
</dbReference>
<dbReference type="Gene3D" id="3.40.190.80">
    <property type="match status" value="1"/>
</dbReference>
<dbReference type="Gene3D" id="3.30.540.10">
    <property type="entry name" value="Fructose-1,6-Bisphosphatase, subunit A, domain 1"/>
    <property type="match status" value="1"/>
</dbReference>
<dbReference type="HAMAP" id="MF_01855">
    <property type="entry name" value="FBPase_class1"/>
    <property type="match status" value="1"/>
</dbReference>
<dbReference type="InterPro" id="IPR044015">
    <property type="entry name" value="FBPase_C_dom"/>
</dbReference>
<dbReference type="InterPro" id="IPR000146">
    <property type="entry name" value="FBPase_class-1"/>
</dbReference>
<dbReference type="InterPro" id="IPR033391">
    <property type="entry name" value="FBPase_N"/>
</dbReference>
<dbReference type="InterPro" id="IPR028343">
    <property type="entry name" value="FBPtase"/>
</dbReference>
<dbReference type="InterPro" id="IPR020548">
    <property type="entry name" value="Fructose_bisphosphatase_AS"/>
</dbReference>
<dbReference type="NCBIfam" id="NF006778">
    <property type="entry name" value="PRK09293.1-1"/>
    <property type="match status" value="1"/>
</dbReference>
<dbReference type="NCBIfam" id="NF006779">
    <property type="entry name" value="PRK09293.1-3"/>
    <property type="match status" value="1"/>
</dbReference>
<dbReference type="PANTHER" id="PTHR11556">
    <property type="entry name" value="FRUCTOSE-1,6-BISPHOSPHATASE-RELATED"/>
    <property type="match status" value="1"/>
</dbReference>
<dbReference type="PANTHER" id="PTHR11556:SF35">
    <property type="entry name" value="SEDOHEPTULOSE-1,7-BISPHOSPHATASE, CHLOROPLASTIC"/>
    <property type="match status" value="1"/>
</dbReference>
<dbReference type="Pfam" id="PF00316">
    <property type="entry name" value="FBPase"/>
    <property type="match status" value="1"/>
</dbReference>
<dbReference type="Pfam" id="PF18913">
    <property type="entry name" value="FBPase_C"/>
    <property type="match status" value="1"/>
</dbReference>
<dbReference type="PIRSF" id="PIRSF500210">
    <property type="entry name" value="FBPtase"/>
    <property type="match status" value="1"/>
</dbReference>
<dbReference type="PIRSF" id="PIRSF000904">
    <property type="entry name" value="FBPtase_SBPase"/>
    <property type="match status" value="1"/>
</dbReference>
<dbReference type="PRINTS" id="PR00115">
    <property type="entry name" value="F16BPHPHTASE"/>
</dbReference>
<dbReference type="SUPFAM" id="SSF56655">
    <property type="entry name" value="Carbohydrate phosphatase"/>
    <property type="match status" value="1"/>
</dbReference>
<dbReference type="PROSITE" id="PS00124">
    <property type="entry name" value="FBPASE"/>
    <property type="match status" value="1"/>
</dbReference>
<evidence type="ECO:0000255" key="1">
    <source>
        <dbReference type="HAMAP-Rule" id="MF_01855"/>
    </source>
</evidence>
<feature type="chain" id="PRO_0000364690" description="Fructose-1,6-bisphosphatase class 1">
    <location>
        <begin position="1"/>
        <end position="332"/>
    </location>
</feature>
<feature type="binding site" evidence="1">
    <location>
        <position position="89"/>
    </location>
    <ligand>
        <name>Mg(2+)</name>
        <dbReference type="ChEBI" id="CHEBI:18420"/>
        <label>1</label>
    </ligand>
</feature>
<feature type="binding site" evidence="1">
    <location>
        <position position="110"/>
    </location>
    <ligand>
        <name>Mg(2+)</name>
        <dbReference type="ChEBI" id="CHEBI:18420"/>
        <label>1</label>
    </ligand>
</feature>
<feature type="binding site" evidence="1">
    <location>
        <position position="110"/>
    </location>
    <ligand>
        <name>Mg(2+)</name>
        <dbReference type="ChEBI" id="CHEBI:18420"/>
        <label>2</label>
    </ligand>
</feature>
<feature type="binding site" evidence="1">
    <location>
        <position position="112"/>
    </location>
    <ligand>
        <name>Mg(2+)</name>
        <dbReference type="ChEBI" id="CHEBI:18420"/>
        <label>1</label>
    </ligand>
</feature>
<feature type="binding site" evidence="1">
    <location>
        <begin position="113"/>
        <end position="116"/>
    </location>
    <ligand>
        <name>substrate</name>
    </ligand>
</feature>
<feature type="binding site" evidence="1">
    <location>
        <position position="113"/>
    </location>
    <ligand>
        <name>Mg(2+)</name>
        <dbReference type="ChEBI" id="CHEBI:18420"/>
        <label>2</label>
    </ligand>
</feature>
<feature type="binding site" evidence="1">
    <location>
        <position position="206"/>
    </location>
    <ligand>
        <name>substrate</name>
    </ligand>
</feature>
<feature type="binding site" evidence="1">
    <location>
        <position position="239"/>
    </location>
    <ligand>
        <name>substrate</name>
    </ligand>
</feature>
<feature type="binding site" evidence="1">
    <location>
        <begin position="257"/>
        <end position="259"/>
    </location>
    <ligand>
        <name>substrate</name>
    </ligand>
</feature>
<feature type="binding site" evidence="1">
    <location>
        <position position="269"/>
    </location>
    <ligand>
        <name>substrate</name>
    </ligand>
</feature>
<feature type="binding site" evidence="1">
    <location>
        <position position="275"/>
    </location>
    <ligand>
        <name>Mg(2+)</name>
        <dbReference type="ChEBI" id="CHEBI:18420"/>
        <label>2</label>
    </ligand>
</feature>